<feature type="chain" id="PRO_0000293134" description="Glutaredoxin 4">
    <location>
        <begin position="1"/>
        <end position="109"/>
    </location>
</feature>
<feature type="domain" description="Glutaredoxin" evidence="2">
    <location>
        <begin position="4"/>
        <end position="106"/>
    </location>
</feature>
<feature type="binding site" evidence="1">
    <location>
        <position position="21"/>
    </location>
    <ligand>
        <name>glutathione</name>
        <dbReference type="ChEBI" id="CHEBI:57925"/>
    </ligand>
</feature>
<feature type="binding site" evidence="1">
    <location>
        <position position="29"/>
    </location>
    <ligand>
        <name>[2Fe-2S] cluster</name>
        <dbReference type="ChEBI" id="CHEBI:190135"/>
        <note>ligand shared between dimeric partners</note>
    </ligand>
</feature>
<feature type="binding site" evidence="1">
    <location>
        <position position="58"/>
    </location>
    <ligand>
        <name>glutathione</name>
        <dbReference type="ChEBI" id="CHEBI:57925"/>
    </ligand>
</feature>
<feature type="binding site" evidence="1">
    <location>
        <position position="70"/>
    </location>
    <ligand>
        <name>glutathione</name>
        <dbReference type="ChEBI" id="CHEBI:57925"/>
    </ligand>
</feature>
<feature type="binding site" evidence="1">
    <location>
        <begin position="83"/>
        <end position="84"/>
    </location>
    <ligand>
        <name>glutathione</name>
        <dbReference type="ChEBI" id="CHEBI:57925"/>
    </ligand>
</feature>
<name>GLRX4_PASMU</name>
<reference key="1">
    <citation type="journal article" date="2001" name="Proc. Natl. Acad. Sci. U.S.A.">
        <title>Complete genomic sequence of Pasteurella multocida Pm70.</title>
        <authorList>
            <person name="May B.J."/>
            <person name="Zhang Q."/>
            <person name="Li L.L."/>
            <person name="Paustian M.L."/>
            <person name="Whittam T.S."/>
            <person name="Kapur V."/>
        </authorList>
    </citation>
    <scope>NUCLEOTIDE SEQUENCE [LARGE SCALE GENOMIC DNA]</scope>
    <source>
        <strain>Pm70</strain>
    </source>
</reference>
<organism>
    <name type="scientific">Pasteurella multocida (strain Pm70)</name>
    <dbReference type="NCBI Taxonomy" id="272843"/>
    <lineage>
        <taxon>Bacteria</taxon>
        <taxon>Pseudomonadati</taxon>
        <taxon>Pseudomonadota</taxon>
        <taxon>Gammaproteobacteria</taxon>
        <taxon>Pasteurellales</taxon>
        <taxon>Pasteurellaceae</taxon>
        <taxon>Pasteurella</taxon>
    </lineage>
</organism>
<gene>
    <name type="primary">grxD</name>
    <name type="ordered locus">PM0782</name>
</gene>
<protein>
    <recommendedName>
        <fullName>Glutaredoxin 4</fullName>
        <shortName>Grx4</shortName>
    </recommendedName>
    <alternativeName>
        <fullName>Monothiol glutaredoxin</fullName>
    </alternativeName>
</protein>
<evidence type="ECO:0000250" key="1"/>
<evidence type="ECO:0000255" key="2">
    <source>
        <dbReference type="PROSITE-ProRule" id="PRU00686"/>
    </source>
</evidence>
<evidence type="ECO:0000305" key="3"/>
<accession>Q9CMN5</accession>
<dbReference type="EMBL" id="AE004439">
    <property type="protein sequence ID" value="AAK02866.1"/>
    <property type="molecule type" value="Genomic_DNA"/>
</dbReference>
<dbReference type="RefSeq" id="WP_005722395.1">
    <property type="nucleotide sequence ID" value="NC_002663.1"/>
</dbReference>
<dbReference type="SMR" id="Q9CMN5"/>
<dbReference type="STRING" id="272843.PM0782"/>
<dbReference type="EnsemblBacteria" id="AAK02866">
    <property type="protein sequence ID" value="AAK02866"/>
    <property type="gene ID" value="PM0782"/>
</dbReference>
<dbReference type="GeneID" id="77207789"/>
<dbReference type="KEGG" id="pmu:PM0782"/>
<dbReference type="HOGENOM" id="CLU_026126_2_1_6"/>
<dbReference type="OrthoDB" id="9804115at2"/>
<dbReference type="Proteomes" id="UP000000809">
    <property type="component" value="Chromosome"/>
</dbReference>
<dbReference type="GO" id="GO:0005737">
    <property type="term" value="C:cytoplasm"/>
    <property type="evidence" value="ECO:0007669"/>
    <property type="project" value="UniProtKB-SubCell"/>
</dbReference>
<dbReference type="GO" id="GO:0051537">
    <property type="term" value="F:2 iron, 2 sulfur cluster binding"/>
    <property type="evidence" value="ECO:0007669"/>
    <property type="project" value="UniProtKB-KW"/>
</dbReference>
<dbReference type="GO" id="GO:0015036">
    <property type="term" value="F:disulfide oxidoreductase activity"/>
    <property type="evidence" value="ECO:0007669"/>
    <property type="project" value="InterPro"/>
</dbReference>
<dbReference type="GO" id="GO:0046872">
    <property type="term" value="F:metal ion binding"/>
    <property type="evidence" value="ECO:0007669"/>
    <property type="project" value="UniProtKB-KW"/>
</dbReference>
<dbReference type="CDD" id="cd03028">
    <property type="entry name" value="GRX_PICOT_like"/>
    <property type="match status" value="1"/>
</dbReference>
<dbReference type="FunFam" id="3.40.30.10:FF:000006">
    <property type="entry name" value="Glutaredoxin"/>
    <property type="match status" value="1"/>
</dbReference>
<dbReference type="Gene3D" id="3.40.30.10">
    <property type="entry name" value="Glutaredoxin"/>
    <property type="match status" value="1"/>
</dbReference>
<dbReference type="InterPro" id="IPR002109">
    <property type="entry name" value="Glutaredoxin"/>
</dbReference>
<dbReference type="InterPro" id="IPR033658">
    <property type="entry name" value="GRX_PICOT-like"/>
</dbReference>
<dbReference type="InterPro" id="IPR014434">
    <property type="entry name" value="Monothiol_GRX"/>
</dbReference>
<dbReference type="InterPro" id="IPR004480">
    <property type="entry name" value="Monothiol_GRX-rel"/>
</dbReference>
<dbReference type="InterPro" id="IPR036249">
    <property type="entry name" value="Thioredoxin-like_sf"/>
</dbReference>
<dbReference type="NCBIfam" id="TIGR00365">
    <property type="entry name" value="Grx4 family monothiol glutaredoxin"/>
    <property type="match status" value="1"/>
</dbReference>
<dbReference type="PANTHER" id="PTHR10293">
    <property type="entry name" value="GLUTAREDOXIN FAMILY MEMBER"/>
    <property type="match status" value="1"/>
</dbReference>
<dbReference type="PANTHER" id="PTHR10293:SF72">
    <property type="entry name" value="MONOTHIOL GLUTAREDOXIN-S14, CHLOROPLASTIC"/>
    <property type="match status" value="1"/>
</dbReference>
<dbReference type="Pfam" id="PF00462">
    <property type="entry name" value="Glutaredoxin"/>
    <property type="match status" value="1"/>
</dbReference>
<dbReference type="PIRSF" id="PIRSF005894">
    <property type="entry name" value="Monothiol_GRX"/>
    <property type="match status" value="1"/>
</dbReference>
<dbReference type="SUPFAM" id="SSF52833">
    <property type="entry name" value="Thioredoxin-like"/>
    <property type="match status" value="1"/>
</dbReference>
<dbReference type="PROSITE" id="PS51354">
    <property type="entry name" value="GLUTAREDOXIN_2"/>
    <property type="match status" value="1"/>
</dbReference>
<keyword id="KW-0001">2Fe-2S</keyword>
<keyword id="KW-0963">Cytoplasm</keyword>
<keyword id="KW-0408">Iron</keyword>
<keyword id="KW-0411">Iron-sulfur</keyword>
<keyword id="KW-0479">Metal-binding</keyword>
<keyword id="KW-0676">Redox-active center</keyword>
<keyword id="KW-1185">Reference proteome</keyword>
<comment type="function">
    <text evidence="1">Monothiol glutaredoxin involved in the biogenesis of iron-sulfur clusters.</text>
</comment>
<comment type="subunit">
    <text evidence="1">Homodimer.</text>
</comment>
<comment type="subcellular location">
    <subcellularLocation>
        <location evidence="1">Cytoplasm</location>
    </subcellularLocation>
</comment>
<comment type="similarity">
    <text evidence="3">Belongs to the glutaredoxin family. Monothiol subfamily.</text>
</comment>
<sequence>METLDKIKKQISENPILIYMKGSPKFPSCGFSARAVEALMHCKVPFGYVDILQHPDIRAELPAYANWPTFPQLWVDGELVGGCDIILEMFQQGELQTLLADVAAKYPQE</sequence>
<proteinExistence type="inferred from homology"/>